<keyword id="KW-0131">Cell cycle</keyword>
<keyword id="KW-0132">Cell division</keyword>
<keyword id="KW-0997">Cell inner membrane</keyword>
<keyword id="KW-1003">Cell membrane</keyword>
<keyword id="KW-0133">Cell shape</keyword>
<keyword id="KW-0961">Cell wall biogenesis/degradation</keyword>
<keyword id="KW-0460">Magnesium</keyword>
<keyword id="KW-0472">Membrane</keyword>
<keyword id="KW-0479">Metal-binding</keyword>
<keyword id="KW-0573">Peptidoglycan synthesis</keyword>
<keyword id="KW-1185">Reference proteome</keyword>
<keyword id="KW-0808">Transferase</keyword>
<keyword id="KW-0812">Transmembrane</keyword>
<keyword id="KW-1133">Transmembrane helix</keyword>
<feature type="chain" id="PRO_0000235451" description="Phospho-N-acetylmuramoyl-pentapeptide-transferase">
    <location>
        <begin position="1"/>
        <end position="358"/>
    </location>
</feature>
<feature type="transmembrane region" description="Helical" evidence="1">
    <location>
        <begin position="21"/>
        <end position="41"/>
    </location>
</feature>
<feature type="transmembrane region" description="Helical" evidence="1">
    <location>
        <begin position="69"/>
        <end position="89"/>
    </location>
</feature>
<feature type="transmembrane region" description="Helical" evidence="1">
    <location>
        <begin position="92"/>
        <end position="112"/>
    </location>
</feature>
<feature type="transmembrane region" description="Helical" evidence="1">
    <location>
        <begin position="133"/>
        <end position="153"/>
    </location>
</feature>
<feature type="transmembrane region" description="Helical" evidence="1">
    <location>
        <begin position="169"/>
        <end position="189"/>
    </location>
</feature>
<feature type="transmembrane region" description="Helical" evidence="1">
    <location>
        <begin position="196"/>
        <end position="216"/>
    </location>
</feature>
<feature type="transmembrane region" description="Helical" evidence="1">
    <location>
        <begin position="233"/>
        <end position="253"/>
    </location>
</feature>
<feature type="transmembrane region" description="Helical" evidence="1">
    <location>
        <begin position="260"/>
        <end position="280"/>
    </location>
</feature>
<feature type="transmembrane region" description="Helical" evidence="1">
    <location>
        <begin position="285"/>
        <end position="305"/>
    </location>
</feature>
<feature type="transmembrane region" description="Helical" evidence="1">
    <location>
        <begin position="335"/>
        <end position="355"/>
    </location>
</feature>
<organism>
    <name type="scientific">Oleidesulfovibrio alaskensis (strain ATCC BAA-1058 / DSM 17464 / G20)</name>
    <name type="common">Desulfovibrio alaskensis</name>
    <dbReference type="NCBI Taxonomy" id="207559"/>
    <lineage>
        <taxon>Bacteria</taxon>
        <taxon>Pseudomonadati</taxon>
        <taxon>Thermodesulfobacteriota</taxon>
        <taxon>Desulfovibrionia</taxon>
        <taxon>Desulfovibrionales</taxon>
        <taxon>Desulfovibrionaceae</taxon>
        <taxon>Oleidesulfovibrio</taxon>
    </lineage>
</organism>
<accession>Q313Q6</accession>
<gene>
    <name evidence="1" type="primary">mraY</name>
    <name type="ordered locus">Dde_1039</name>
</gene>
<protein>
    <recommendedName>
        <fullName evidence="1">Phospho-N-acetylmuramoyl-pentapeptide-transferase</fullName>
        <ecNumber evidence="1">2.7.8.13</ecNumber>
    </recommendedName>
    <alternativeName>
        <fullName evidence="1">UDP-MurNAc-pentapeptide phosphotransferase</fullName>
    </alternativeName>
</protein>
<proteinExistence type="inferred from homology"/>
<dbReference type="EC" id="2.7.8.13" evidence="1"/>
<dbReference type="EMBL" id="CP000112">
    <property type="protein sequence ID" value="ABB37840.1"/>
    <property type="molecule type" value="Genomic_DNA"/>
</dbReference>
<dbReference type="RefSeq" id="WP_011367077.1">
    <property type="nucleotide sequence ID" value="NC_007519.1"/>
</dbReference>
<dbReference type="SMR" id="Q313Q6"/>
<dbReference type="STRING" id="207559.Dde_1039"/>
<dbReference type="KEGG" id="dde:Dde_1039"/>
<dbReference type="eggNOG" id="COG0472">
    <property type="taxonomic scope" value="Bacteria"/>
</dbReference>
<dbReference type="HOGENOM" id="CLU_023982_0_0_7"/>
<dbReference type="UniPathway" id="UPA00219"/>
<dbReference type="Proteomes" id="UP000002710">
    <property type="component" value="Chromosome"/>
</dbReference>
<dbReference type="GO" id="GO:0005886">
    <property type="term" value="C:plasma membrane"/>
    <property type="evidence" value="ECO:0007669"/>
    <property type="project" value="UniProtKB-SubCell"/>
</dbReference>
<dbReference type="GO" id="GO:0046872">
    <property type="term" value="F:metal ion binding"/>
    <property type="evidence" value="ECO:0007669"/>
    <property type="project" value="UniProtKB-KW"/>
</dbReference>
<dbReference type="GO" id="GO:0008963">
    <property type="term" value="F:phospho-N-acetylmuramoyl-pentapeptide-transferase activity"/>
    <property type="evidence" value="ECO:0007669"/>
    <property type="project" value="UniProtKB-UniRule"/>
</dbReference>
<dbReference type="GO" id="GO:0051992">
    <property type="term" value="F:UDP-N-acetylmuramoyl-L-alanyl-D-glutamyl-meso-2,6-diaminopimelyl-D-alanyl-D-alanine:undecaprenyl-phosphate transferase activity"/>
    <property type="evidence" value="ECO:0007669"/>
    <property type="project" value="RHEA"/>
</dbReference>
<dbReference type="GO" id="GO:0051301">
    <property type="term" value="P:cell division"/>
    <property type="evidence" value="ECO:0007669"/>
    <property type="project" value="UniProtKB-KW"/>
</dbReference>
<dbReference type="GO" id="GO:0071555">
    <property type="term" value="P:cell wall organization"/>
    <property type="evidence" value="ECO:0007669"/>
    <property type="project" value="UniProtKB-KW"/>
</dbReference>
<dbReference type="GO" id="GO:0009252">
    <property type="term" value="P:peptidoglycan biosynthetic process"/>
    <property type="evidence" value="ECO:0007669"/>
    <property type="project" value="UniProtKB-UniRule"/>
</dbReference>
<dbReference type="GO" id="GO:0008360">
    <property type="term" value="P:regulation of cell shape"/>
    <property type="evidence" value="ECO:0007669"/>
    <property type="project" value="UniProtKB-KW"/>
</dbReference>
<dbReference type="CDD" id="cd06852">
    <property type="entry name" value="GT_MraY"/>
    <property type="match status" value="1"/>
</dbReference>
<dbReference type="HAMAP" id="MF_00038">
    <property type="entry name" value="MraY"/>
    <property type="match status" value="1"/>
</dbReference>
<dbReference type="InterPro" id="IPR000715">
    <property type="entry name" value="Glycosyl_transferase_4"/>
</dbReference>
<dbReference type="InterPro" id="IPR003524">
    <property type="entry name" value="PNAcMuramoyl-5peptid_Trfase"/>
</dbReference>
<dbReference type="InterPro" id="IPR018480">
    <property type="entry name" value="PNAcMuramoyl-5peptid_Trfase_CS"/>
</dbReference>
<dbReference type="NCBIfam" id="TIGR00445">
    <property type="entry name" value="mraY"/>
    <property type="match status" value="1"/>
</dbReference>
<dbReference type="PANTHER" id="PTHR22926">
    <property type="entry name" value="PHOSPHO-N-ACETYLMURAMOYL-PENTAPEPTIDE-TRANSFERASE"/>
    <property type="match status" value="1"/>
</dbReference>
<dbReference type="PANTHER" id="PTHR22926:SF5">
    <property type="entry name" value="PHOSPHO-N-ACETYLMURAMOYL-PENTAPEPTIDE-TRANSFERASE HOMOLOG"/>
    <property type="match status" value="1"/>
</dbReference>
<dbReference type="Pfam" id="PF00953">
    <property type="entry name" value="Glycos_transf_4"/>
    <property type="match status" value="1"/>
</dbReference>
<dbReference type="Pfam" id="PF10555">
    <property type="entry name" value="MraY_sig1"/>
    <property type="match status" value="1"/>
</dbReference>
<dbReference type="PROSITE" id="PS01348">
    <property type="entry name" value="MRAY_2"/>
    <property type="match status" value="1"/>
</dbReference>
<sequence length="358" mass="39776">MLYHFLYPLSAELPLLNVFRYITFRSVWALLTALLITIFIGPRFIRWLKRVKCGQYIQEEVSCHVQKAGTPTMGGLLIGFSLIISVLLWGDLTNVYLWLVMLVFTGFGLVGFLDDYTKLRRKTNQGLTARSKFLWQMVIAAVAMYFLVKEPAYSTVLSFPFFKNLQPDLGWFYIPFAMIVLVGSSNGVNLTDGMDGLAIGPTVVAGIVFSIFIYIAGHSQIAGYLQVPYVPGMGEVTVFCGALIGAGLGFLWFNAYPAQVFMGDVGSLSLGGALGFLAVLCKQELIMLVAGGLFVLESLSVILQVGYFRMTGGKRIFRMAPLHHHFELKGIPESKIIIRFWIMSIVFGLMALSVLKLR</sequence>
<evidence type="ECO:0000255" key="1">
    <source>
        <dbReference type="HAMAP-Rule" id="MF_00038"/>
    </source>
</evidence>
<comment type="function">
    <text evidence="1">Catalyzes the initial step of the lipid cycle reactions in the biosynthesis of the cell wall peptidoglycan: transfers peptidoglycan precursor phospho-MurNAc-pentapeptide from UDP-MurNAc-pentapeptide onto the lipid carrier undecaprenyl phosphate, yielding undecaprenyl-pyrophosphoryl-MurNAc-pentapeptide, known as lipid I.</text>
</comment>
<comment type="catalytic activity">
    <reaction evidence="1">
        <text>UDP-N-acetyl-alpha-D-muramoyl-L-alanyl-gamma-D-glutamyl-meso-2,6-diaminopimeloyl-D-alanyl-D-alanine + di-trans,octa-cis-undecaprenyl phosphate = di-trans,octa-cis-undecaprenyl diphospho-N-acetyl-alpha-D-muramoyl-L-alanyl-D-glutamyl-meso-2,6-diaminopimeloyl-D-alanyl-D-alanine + UMP</text>
        <dbReference type="Rhea" id="RHEA:28386"/>
        <dbReference type="ChEBI" id="CHEBI:57865"/>
        <dbReference type="ChEBI" id="CHEBI:60392"/>
        <dbReference type="ChEBI" id="CHEBI:61386"/>
        <dbReference type="ChEBI" id="CHEBI:61387"/>
        <dbReference type="EC" id="2.7.8.13"/>
    </reaction>
</comment>
<comment type="cofactor">
    <cofactor evidence="1">
        <name>Mg(2+)</name>
        <dbReference type="ChEBI" id="CHEBI:18420"/>
    </cofactor>
</comment>
<comment type="pathway">
    <text evidence="1">Cell wall biogenesis; peptidoglycan biosynthesis.</text>
</comment>
<comment type="subcellular location">
    <subcellularLocation>
        <location evidence="1">Cell inner membrane</location>
        <topology evidence="1">Multi-pass membrane protein</topology>
    </subcellularLocation>
</comment>
<comment type="similarity">
    <text evidence="1">Belongs to the glycosyltransferase 4 family. MraY subfamily.</text>
</comment>
<name>MRAY_OLEA2</name>
<reference key="1">
    <citation type="journal article" date="2011" name="J. Bacteriol.">
        <title>Complete genome sequence and updated annotation of Desulfovibrio alaskensis G20.</title>
        <authorList>
            <person name="Hauser L.J."/>
            <person name="Land M.L."/>
            <person name="Brown S.D."/>
            <person name="Larimer F."/>
            <person name="Keller K.L."/>
            <person name="Rapp-Giles B.J."/>
            <person name="Price M.N."/>
            <person name="Lin M."/>
            <person name="Bruce D.C."/>
            <person name="Detter J.C."/>
            <person name="Tapia R."/>
            <person name="Han C.S."/>
            <person name="Goodwin L.A."/>
            <person name="Cheng J.F."/>
            <person name="Pitluck S."/>
            <person name="Copeland A."/>
            <person name="Lucas S."/>
            <person name="Nolan M."/>
            <person name="Lapidus A.L."/>
            <person name="Palumbo A.V."/>
            <person name="Wall J.D."/>
        </authorList>
    </citation>
    <scope>NUCLEOTIDE SEQUENCE [LARGE SCALE GENOMIC DNA]</scope>
    <source>
        <strain>ATCC BAA-1058 / DSM 17464 / G20</strain>
    </source>
</reference>